<organism>
    <name type="scientific">Mus musculus</name>
    <name type="common">Mouse</name>
    <dbReference type="NCBI Taxonomy" id="10090"/>
    <lineage>
        <taxon>Eukaryota</taxon>
        <taxon>Metazoa</taxon>
        <taxon>Chordata</taxon>
        <taxon>Craniata</taxon>
        <taxon>Vertebrata</taxon>
        <taxon>Euteleostomi</taxon>
        <taxon>Mammalia</taxon>
        <taxon>Eutheria</taxon>
        <taxon>Euarchontoglires</taxon>
        <taxon>Glires</taxon>
        <taxon>Rodentia</taxon>
        <taxon>Myomorpha</taxon>
        <taxon>Muroidea</taxon>
        <taxon>Muridae</taxon>
        <taxon>Murinae</taxon>
        <taxon>Mus</taxon>
        <taxon>Mus</taxon>
    </lineage>
</organism>
<reference key="1">
    <citation type="journal article" date="2009" name="PLoS Biol.">
        <title>Lineage-specific biology revealed by a finished genome assembly of the mouse.</title>
        <authorList>
            <person name="Church D.M."/>
            <person name="Goodstadt L."/>
            <person name="Hillier L.W."/>
            <person name="Zody M.C."/>
            <person name="Goldstein S."/>
            <person name="She X."/>
            <person name="Bult C.J."/>
            <person name="Agarwala R."/>
            <person name="Cherry J.L."/>
            <person name="DiCuccio M."/>
            <person name="Hlavina W."/>
            <person name="Kapustin Y."/>
            <person name="Meric P."/>
            <person name="Maglott D."/>
            <person name="Birtle Z."/>
            <person name="Marques A.C."/>
            <person name="Graves T."/>
            <person name="Zhou S."/>
            <person name="Teague B."/>
            <person name="Potamousis K."/>
            <person name="Churas C."/>
            <person name="Place M."/>
            <person name="Herschleb J."/>
            <person name="Runnheim R."/>
            <person name="Forrest D."/>
            <person name="Amos-Landgraf J."/>
            <person name="Schwartz D.C."/>
            <person name="Cheng Z."/>
            <person name="Lindblad-Toh K."/>
            <person name="Eichler E.E."/>
            <person name="Ponting C.P."/>
        </authorList>
    </citation>
    <scope>NUCLEOTIDE SEQUENCE [LARGE SCALE GENOMIC DNA]</scope>
    <source>
        <strain>C57BL/6J</strain>
    </source>
</reference>
<reference key="2">
    <citation type="journal article" date="2017" name="Biol. Reprod.">
        <title>A nonsense mutation in Ccdc62 gene is responsible for spermiogenesis defects and male infertility in repro29/repro29 mice.</title>
        <authorList>
            <person name="Li Y."/>
            <person name="Li C."/>
            <person name="Lin S."/>
            <person name="Yang B."/>
            <person name="Huang W."/>
            <person name="Wu H."/>
            <person name="Chen Y."/>
            <person name="Yang L."/>
            <person name="Luo M."/>
            <person name="Guo H."/>
            <person name="Chen J."/>
            <person name="Wang T."/>
            <person name="Ma Q."/>
            <person name="Gu Y."/>
            <person name="Mou L."/>
            <person name="Jiang Z."/>
            <person name="Xia J."/>
            <person name="Gui Y."/>
        </authorList>
    </citation>
    <scope>FUNCTION</scope>
    <scope>TISSUE SPECIFICITY</scope>
    <scope>SUBCELLULAR LOCATION</scope>
    <scope>MUTAGENESIS OF 284-ARG--HIS-701</scope>
    <scope>INTERACTION WITH GOPC</scope>
</reference>
<comment type="function">
    <text evidence="1 4">Nuclear receptor coactivator that can enhance preferentially estrogen receptors ESR1 and ESR2 transactivation. Also modulates progesterone/PGR, glucocorticoid/NR3C1 and androgen/AR receptors transactivation, although at lower level; little effect on vitamin D receptor/VDR (By similarity). Required for normal spermiogenesis (PubMed:28339613). It probably plays a role in acrosome formation (PubMed:28339613).</text>
</comment>
<comment type="subunit">
    <text evidence="1 4">Interacts with ESR1 and ESR2 in the presence of estradiol/E2. The interaction with ESR2 recruits CCDC62 to ER target genes, including cyclin-D1/CCND1 AP-1 promoter (By similarity). Interacts with GOPC (PubMed:28339613).</text>
</comment>
<comment type="subcellular location">
    <subcellularLocation>
        <location evidence="1">Cytoplasm</location>
    </subcellularLocation>
    <subcellularLocation>
        <location>Nucleus</location>
    </subcellularLocation>
    <subcellularLocation>
        <location evidence="4">Cytoplasmic vesicle</location>
        <location evidence="4">Secretory vesicle</location>
        <location evidence="4">Acrosome</location>
    </subcellularLocation>
    <text evidence="1">Mainly nuclear.</text>
</comment>
<comment type="tissue specificity">
    <text evidence="4">Highly expressed in testis, not detected in other tissues (at protein level). Expressed at low levels in the epididymis, lung, spleen, bladder, kidney, liver, muscle.</text>
</comment>
<comment type="domain">
    <text evidence="1">Contains 2 Leu-Xaa-Xaa-Leu-Leu (LXXLL) motifs. The first one is essential for the association with ESR1 and ESR2 (By similarity).</text>
</comment>
<name>CCD62_MOUSE</name>
<keyword id="KW-0175">Coiled coil</keyword>
<keyword id="KW-0963">Cytoplasm</keyword>
<keyword id="KW-0968">Cytoplasmic vesicle</keyword>
<keyword id="KW-0539">Nucleus</keyword>
<keyword id="KW-1185">Reference proteome</keyword>
<keyword id="KW-0677">Repeat</keyword>
<gene>
    <name type="primary">Ccdc62</name>
</gene>
<sequence length="701" mass="79317">MRSSEGAPSWAVALPPPLRPCAYGVSEVTRCWHQLSLGAGESSMNPSATLYRRQNIGSEVETSTIEKQRKELQLLIGELKDRDKELNDMVAVHQRQLLSWEEDRQKVLTLEERCSKLEGELHKRTDIIKSLMKKVKTLESNQAECQTALQKTQQQLQEMAQKATHSTLLSEDLEARNENLSSTLVDLSAQVGQLQAREQALTTMIKLKDKDIIEAVNHISDCSGKFKLLEHALRDAKMAETCVVREKQDYKQKLKALRIEVNKLKEDLNEKTTENNEQREEIIRLKQEKSCLHDELIFTVEREKRKDELLDIAKSKQDRTNSELQNLRQIYVKQQSDLQFLNFNIESSQELIQIHGLKMEEPKALECSKDMCLSDLDNNYPKIDIKRERNQKSLVKDQTFEVMLAQHNGSDKSSCDACREKKLQVNTALGEKSVIALSSLFTKDLLDKQKSWSLGGKIQTEPENKVTLCKVHAKSPKCDGVGLPTEEKQLSETSVSLSDEKQWHDINVYLGLSSCSKQPDRLDGDGHDRTGTSEVSCCTPNVVCIGDNDLSESKCCHPSNIIIEAPGHMTDTEWMNIFKPSRAQRIVRHKTMCTCSRSVSAMKYNSSASELIGMQPSQCVGSLKSAEREEESAALPDRRTSANEKDDFSPTSKLQRLLAESRQMVTDLELSTLLPISCENLNRSKLEVSEEPDEKTTLVSH</sequence>
<evidence type="ECO:0000250" key="1"/>
<evidence type="ECO:0000255" key="2"/>
<evidence type="ECO:0000256" key="3">
    <source>
        <dbReference type="SAM" id="MobiDB-lite"/>
    </source>
</evidence>
<evidence type="ECO:0000269" key="4">
    <source>
    </source>
</evidence>
<protein>
    <recommendedName>
        <fullName>Coiled-coil domain-containing protein 62</fullName>
    </recommendedName>
</protein>
<feature type="chain" id="PRO_0000415823" description="Coiled-coil domain-containing protein 62">
    <location>
        <begin position="1"/>
        <end position="701"/>
    </location>
</feature>
<feature type="region of interest" description="Disordered" evidence="3">
    <location>
        <begin position="624"/>
        <end position="652"/>
    </location>
</feature>
<feature type="coiled-coil region" evidence="2">
    <location>
        <begin position="61"/>
        <end position="197"/>
    </location>
</feature>
<feature type="coiled-coil region" evidence="2">
    <location>
        <begin position="241"/>
        <end position="342"/>
    </location>
</feature>
<feature type="short sequence motif" description="LXXLL motif 1">
    <location>
        <begin position="654"/>
        <end position="658"/>
    </location>
</feature>
<feature type="short sequence motif" description="LXXLL motif 2">
    <location>
        <begin position="670"/>
        <end position="674"/>
    </location>
</feature>
<feature type="compositionally biased region" description="Basic and acidic residues" evidence="3">
    <location>
        <begin position="636"/>
        <end position="648"/>
    </location>
</feature>
<feature type="mutagenesis site" description="Loss of interaction with GOPC. Does not localize to the acrosome. Homozygous mutant mice are infertile and show deformed sperm with reduced motility." evidence="4">
    <location>
        <begin position="284"/>
        <end position="701"/>
    </location>
</feature>
<dbReference type="EMBL" id="AC122753">
    <property type="status" value="NOT_ANNOTATED_CDS"/>
    <property type="molecule type" value="Genomic_DNA"/>
</dbReference>
<dbReference type="CCDS" id="CCDS51646.1"/>
<dbReference type="RefSeq" id="NP_001128239.1">
    <property type="nucleotide sequence ID" value="NM_001134767.1"/>
</dbReference>
<dbReference type="RefSeq" id="XP_006530318.1">
    <property type="nucleotide sequence ID" value="XM_006530255.5"/>
</dbReference>
<dbReference type="RefSeq" id="XP_036020857.1">
    <property type="nucleotide sequence ID" value="XM_036164964.1"/>
</dbReference>
<dbReference type="SMR" id="E9PVD1"/>
<dbReference type="BioGRID" id="229023">
    <property type="interactions" value="1"/>
</dbReference>
<dbReference type="FunCoup" id="E9PVD1">
    <property type="interactions" value="617"/>
</dbReference>
<dbReference type="STRING" id="10090.ENSMUSP00000091878"/>
<dbReference type="iPTMnet" id="E9PVD1"/>
<dbReference type="PhosphoSitePlus" id="E9PVD1"/>
<dbReference type="PaxDb" id="10090-ENSMUSP00000127483"/>
<dbReference type="ProteomicsDB" id="283733"/>
<dbReference type="Antibodypedia" id="52252">
    <property type="antibodies" value="67 antibodies from 16 providers"/>
</dbReference>
<dbReference type="Ensembl" id="ENSMUST00000094320.11">
    <property type="protein sequence ID" value="ENSMUSP00000091878.4"/>
    <property type="gene ID" value="ENSMUSG00000061882.14"/>
</dbReference>
<dbReference type="GeneID" id="208908"/>
<dbReference type="KEGG" id="mmu:208908"/>
<dbReference type="UCSC" id="uc012edk.1">
    <property type="organism name" value="mouse"/>
</dbReference>
<dbReference type="AGR" id="MGI:2684996"/>
<dbReference type="CTD" id="84660"/>
<dbReference type="MGI" id="MGI:2684996">
    <property type="gene designation" value="Ccdc62"/>
</dbReference>
<dbReference type="VEuPathDB" id="HostDB:ENSMUSG00000061882"/>
<dbReference type="eggNOG" id="ENOG502RHSF">
    <property type="taxonomic scope" value="Eukaryota"/>
</dbReference>
<dbReference type="GeneTree" id="ENSGT00400000022269"/>
<dbReference type="HOGENOM" id="CLU_025504_0_0_1"/>
<dbReference type="InParanoid" id="E9PVD1"/>
<dbReference type="OMA" id="QFLHFNV"/>
<dbReference type="OrthoDB" id="6155277at2759"/>
<dbReference type="PhylomeDB" id="E9PVD1"/>
<dbReference type="TreeFam" id="TF329149"/>
<dbReference type="BioGRID-ORCS" id="208908">
    <property type="hits" value="4 hits in 77 CRISPR screens"/>
</dbReference>
<dbReference type="PRO" id="PR:E9PVD1"/>
<dbReference type="Proteomes" id="UP000000589">
    <property type="component" value="Chromosome 5"/>
</dbReference>
<dbReference type="RNAct" id="E9PVD1">
    <property type="molecule type" value="protein"/>
</dbReference>
<dbReference type="Bgee" id="ENSMUSG00000061882">
    <property type="expression patterns" value="Expressed in spermatid and 113 other cell types or tissues"/>
</dbReference>
<dbReference type="GO" id="GO:0001669">
    <property type="term" value="C:acrosomal vesicle"/>
    <property type="evidence" value="ECO:0000314"/>
    <property type="project" value="UniProtKB"/>
</dbReference>
<dbReference type="GO" id="GO:0005634">
    <property type="term" value="C:nucleus"/>
    <property type="evidence" value="ECO:0007669"/>
    <property type="project" value="UniProtKB-SubCell"/>
</dbReference>
<dbReference type="GO" id="GO:0030331">
    <property type="term" value="F:nuclear estrogen receptor binding"/>
    <property type="evidence" value="ECO:0007669"/>
    <property type="project" value="Ensembl"/>
</dbReference>
<dbReference type="GO" id="GO:0003713">
    <property type="term" value="F:transcription coactivator activity"/>
    <property type="evidence" value="ECO:0007669"/>
    <property type="project" value="Ensembl"/>
</dbReference>
<dbReference type="GO" id="GO:0001835">
    <property type="term" value="P:blastocyst hatching"/>
    <property type="evidence" value="ECO:0000315"/>
    <property type="project" value="MGI"/>
</dbReference>
<dbReference type="GO" id="GO:0071392">
    <property type="term" value="P:cellular response to estradiol stimulus"/>
    <property type="evidence" value="ECO:0007669"/>
    <property type="project" value="Ensembl"/>
</dbReference>
<dbReference type="GO" id="GO:0030520">
    <property type="term" value="P:estrogen receptor signaling pathway"/>
    <property type="evidence" value="ECO:0007669"/>
    <property type="project" value="Ensembl"/>
</dbReference>
<dbReference type="GO" id="GO:0045944">
    <property type="term" value="P:positive regulation of transcription by RNA polymerase II"/>
    <property type="evidence" value="ECO:0007669"/>
    <property type="project" value="Ensembl"/>
</dbReference>
<dbReference type="GO" id="GO:0007286">
    <property type="term" value="P:spermatid development"/>
    <property type="evidence" value="ECO:0000315"/>
    <property type="project" value="UniProtKB"/>
</dbReference>
<proteinExistence type="evidence at protein level"/>
<accession>E9PVD1</accession>
<accession>F6WEA5</accession>